<feature type="chain" id="PRO_0000054868" description="Very-long-chain 3-oxoacyl-CoA reductase">
    <location>
        <begin position="1"/>
        <end position="347"/>
    </location>
</feature>
<feature type="transmembrane region" description="Helical" evidence="3">
    <location>
        <begin position="20"/>
        <end position="40"/>
    </location>
</feature>
<feature type="active site" description="Proton donor" evidence="2">
    <location>
        <position position="223"/>
    </location>
</feature>
<feature type="active site" description="Lowers pKa of active site Tyr" evidence="2">
    <location>
        <position position="227"/>
    </location>
</feature>
<feature type="binding site" evidence="1">
    <location>
        <position position="120"/>
    </location>
    <ligand>
        <name>NADP(+)</name>
        <dbReference type="ChEBI" id="CHEBI:58349"/>
    </ligand>
</feature>
<feature type="binding site" evidence="2">
    <location>
        <position position="147"/>
    </location>
    <ligand>
        <name>NADP(+)</name>
        <dbReference type="ChEBI" id="CHEBI:58349"/>
    </ligand>
</feature>
<feature type="binding site" evidence="2">
    <location>
        <position position="223"/>
    </location>
    <ligand>
        <name>NADP(+)</name>
        <dbReference type="ChEBI" id="CHEBI:58349"/>
    </ligand>
</feature>
<feature type="binding site" evidence="2">
    <location>
        <position position="227"/>
    </location>
    <ligand>
        <name>NADP(+)</name>
        <dbReference type="ChEBI" id="CHEBI:58349"/>
    </ligand>
</feature>
<feature type="binding site" evidence="2">
    <location>
        <position position="256"/>
    </location>
    <ligand>
        <name>NADP(+)</name>
        <dbReference type="ChEBI" id="CHEBI:58349"/>
    </ligand>
</feature>
<feature type="binding site" evidence="1">
    <location>
        <position position="258"/>
    </location>
    <ligand>
        <name>NADP(+)</name>
        <dbReference type="ChEBI" id="CHEBI:58349"/>
    </ligand>
</feature>
<gene>
    <name type="primary">IFA38</name>
    <name type="ordered locus">YBR159W</name>
    <name type="ORF">YBR1209</name>
</gene>
<protein>
    <recommendedName>
        <fullName evidence="3">Very-long-chain 3-oxoacyl-CoA reductase</fullName>
        <ecNumber evidence="3">1.1.1.330</ecNumber>
    </recommendedName>
    <alternativeName>
        <fullName evidence="3">3-ketoacyl-CoA reductase</fullName>
        <shortName evidence="3">3-ketoreductase</shortName>
        <shortName evidence="3">KAR</shortName>
    </alternativeName>
    <alternativeName>
        <fullName evidence="3">Microsomal beta-keto-reductase</fullName>
    </alternativeName>
</protein>
<proteinExistence type="evidence at protein level"/>
<sequence>MTFMQQLQEAGERFRCINGLLWVVFGLGVLKCTTLSLRFLALIFDLFLLPAVNFDKYGAKTGKYCAITGASDGIGKEFARQMAKRGFNLVLISRTQSKLEALQKELEDQHHVVVKILAIDIAEDKESNYESIKELCAQLPITVLVNNVGQSHSIPVPFLETEEKELRNIITINNTATLLITQIIAPKIVETVKAENKKSGTRGLILTMGSFGGLIPTPLLATYSGSKSFLQGWSNSLAGELSKDAIDVELIISYLVTSSMSKIRRSSLMIPNPQQFVKSTLRSVGRRCGSQERYATMTPYWAHAVYQFVITETFGVYSKIVNSINYSFHKSIRIRALKKAARQVKKE</sequence>
<name>MKAR_YEAST</name>
<accession>P38286</accession>
<accession>D6VQF4</accession>
<comment type="function">
    <text evidence="3 4 5 6 8">Component of the microsomal membrane bound fatty acid elongation system, which produces the 26-carbon very long-chain fatty acids (VLCFA) from palmitate. Catalyzes the reduction of the 3-ketoacyl-CoA intermediate that is formed in each cycle of fatty acid elongation. VLCFAs serve as precursors for ceramide and sphingolipids.</text>
</comment>
<comment type="catalytic activity">
    <reaction evidence="3 5">
        <text>a very-long-chain (3R)-3-hydroxyacyl-CoA + NADP(+) = a very-long-chain 3-oxoacyl-CoA + NADPH + H(+)</text>
        <dbReference type="Rhea" id="RHEA:48680"/>
        <dbReference type="ChEBI" id="CHEBI:15378"/>
        <dbReference type="ChEBI" id="CHEBI:57783"/>
        <dbReference type="ChEBI" id="CHEBI:58349"/>
        <dbReference type="ChEBI" id="CHEBI:85440"/>
        <dbReference type="ChEBI" id="CHEBI:90725"/>
        <dbReference type="EC" id="1.1.1.330"/>
    </reaction>
</comment>
<comment type="catalytic activity">
    <reaction evidence="5 10 12">
        <text>3-oxooctadecanoyl-CoA + NADPH + H(+) = (3R)-hydroxyoctadecanoyl-CoA + NADP(+)</text>
        <dbReference type="Rhea" id="RHEA:39151"/>
        <dbReference type="ChEBI" id="CHEBI:15378"/>
        <dbReference type="ChEBI" id="CHEBI:57783"/>
        <dbReference type="ChEBI" id="CHEBI:58349"/>
        <dbReference type="ChEBI" id="CHEBI:71407"/>
        <dbReference type="ChEBI" id="CHEBI:76374"/>
    </reaction>
    <physiologicalReaction direction="left-to-right" evidence="11 12 13">
        <dbReference type="Rhea" id="RHEA:39152"/>
    </physiologicalReaction>
</comment>
<comment type="catalytic activity">
    <reaction evidence="5 12">
        <text>3-oxoeicosanoyl-CoA + NADPH + H(+) = (3R)-hydroxyeicosanoyl-CoA + NADP(+)</text>
        <dbReference type="Rhea" id="RHEA:39171"/>
        <dbReference type="ChEBI" id="CHEBI:15378"/>
        <dbReference type="ChEBI" id="CHEBI:57783"/>
        <dbReference type="ChEBI" id="CHEBI:58349"/>
        <dbReference type="ChEBI" id="CHEBI:65115"/>
        <dbReference type="ChEBI" id="CHEBI:76373"/>
    </reaction>
    <physiologicalReaction direction="left-to-right" evidence="11 12">
        <dbReference type="Rhea" id="RHEA:39172"/>
    </physiologicalReaction>
</comment>
<comment type="catalytic activity">
    <reaction evidence="12">
        <text>3-oxodocosanoyl-CoA + NADPH + H(+) = (3R)-hydroxydocosanoyl-CoA + NADP(+)</text>
        <dbReference type="Rhea" id="RHEA:39183"/>
        <dbReference type="ChEBI" id="CHEBI:15378"/>
        <dbReference type="ChEBI" id="CHEBI:57783"/>
        <dbReference type="ChEBI" id="CHEBI:58349"/>
        <dbReference type="ChEBI" id="CHEBI:71451"/>
        <dbReference type="ChEBI" id="CHEBI:76375"/>
    </reaction>
    <physiologicalReaction direction="left-to-right" evidence="12">
        <dbReference type="Rhea" id="RHEA:39184"/>
    </physiologicalReaction>
</comment>
<comment type="catalytic activity">
    <reaction evidence="12">
        <text>3-oxotetracosanoyl-CoA + NADPH + H(+) = (3R)-hydroxytetracosanoyl-CoA + NADP(+)</text>
        <dbReference type="Rhea" id="RHEA:39195"/>
        <dbReference type="ChEBI" id="CHEBI:15378"/>
        <dbReference type="ChEBI" id="CHEBI:57783"/>
        <dbReference type="ChEBI" id="CHEBI:58349"/>
        <dbReference type="ChEBI" id="CHEBI:73977"/>
        <dbReference type="ChEBI" id="CHEBI:76377"/>
    </reaction>
    <physiologicalReaction direction="left-to-right" evidence="12">
        <dbReference type="Rhea" id="RHEA:39196"/>
    </physiologicalReaction>
</comment>
<comment type="catalytic activity">
    <reaction evidence="12">
        <text>3-oxohexacosanoyl-CoA + NADPH + H(+) = (3R)-hydroxyhexacosanoyl-CoA + NADP(+)</text>
        <dbReference type="Rhea" id="RHEA:39207"/>
        <dbReference type="ChEBI" id="CHEBI:15378"/>
        <dbReference type="ChEBI" id="CHEBI:57783"/>
        <dbReference type="ChEBI" id="CHEBI:58349"/>
        <dbReference type="ChEBI" id="CHEBI:73980"/>
        <dbReference type="ChEBI" id="CHEBI:76378"/>
    </reaction>
    <physiologicalReaction direction="left-to-right" evidence="12">
        <dbReference type="Rhea" id="RHEA:39208"/>
    </physiologicalReaction>
</comment>
<comment type="pathway">
    <text evidence="5">Lipid metabolism; fatty acid biosynthesis.</text>
</comment>
<comment type="subunit">
    <text evidence="3 5">Interacts with the fatty acid elongation system components ELO3 and TSC13.</text>
</comment>
<comment type="subcellular location">
    <subcellularLocation>
        <location evidence="3 9">Endoplasmic reticulum membrane</location>
        <topology evidence="3">Single-pass membrane protein</topology>
    </subcellularLocation>
</comment>
<comment type="miscellaneous">
    <text evidence="7">Present with 41900 molecules/cell in log phase SD medium.</text>
</comment>
<comment type="similarity">
    <text evidence="3">Belongs to the short-chain dehydrogenases/reductases (SDR) family.</text>
</comment>
<keyword id="KW-0256">Endoplasmic reticulum</keyword>
<keyword id="KW-0275">Fatty acid biosynthesis</keyword>
<keyword id="KW-0276">Fatty acid metabolism</keyword>
<keyword id="KW-0444">Lipid biosynthesis</keyword>
<keyword id="KW-0443">Lipid metabolism</keyword>
<keyword id="KW-0472">Membrane</keyword>
<keyword id="KW-0521">NADP</keyword>
<keyword id="KW-0560">Oxidoreductase</keyword>
<keyword id="KW-1185">Reference proteome</keyword>
<keyword id="KW-0812">Transmembrane</keyword>
<keyword id="KW-1133">Transmembrane helix</keyword>
<evidence type="ECO:0000250" key="1">
    <source>
        <dbReference type="UniProtKB" id="L0E2Z4"/>
    </source>
</evidence>
<evidence type="ECO:0000250" key="2">
    <source>
        <dbReference type="UniProtKB" id="O93868"/>
    </source>
</evidence>
<evidence type="ECO:0000255" key="3">
    <source>
        <dbReference type="HAMAP-Rule" id="MF_03107"/>
    </source>
</evidence>
<evidence type="ECO:0000269" key="4">
    <source>
    </source>
</evidence>
<evidence type="ECO:0000269" key="5">
    <source>
    </source>
</evidence>
<evidence type="ECO:0000269" key="6">
    <source>
    </source>
</evidence>
<evidence type="ECO:0000269" key="7">
    <source>
    </source>
</evidence>
<evidence type="ECO:0000269" key="8">
    <source>
    </source>
</evidence>
<evidence type="ECO:0000269" key="9">
    <source>
    </source>
</evidence>
<evidence type="ECO:0000269" key="10">
    <source>
    </source>
</evidence>
<evidence type="ECO:0000305" key="11">
    <source>
    </source>
</evidence>
<evidence type="ECO:0000305" key="12">
    <source>
    </source>
</evidence>
<evidence type="ECO:0000305" key="13">
    <source>
    </source>
</evidence>
<reference key="1">
    <citation type="journal article" date="1994" name="EMBO J.">
        <title>Complete DNA sequence of yeast chromosome II.</title>
        <authorList>
            <person name="Feldmann H."/>
            <person name="Aigle M."/>
            <person name="Aljinovic G."/>
            <person name="Andre B."/>
            <person name="Baclet M.C."/>
            <person name="Barthe C."/>
            <person name="Baur A."/>
            <person name="Becam A.-M."/>
            <person name="Biteau N."/>
            <person name="Boles E."/>
            <person name="Brandt T."/>
            <person name="Brendel M."/>
            <person name="Brueckner M."/>
            <person name="Bussereau F."/>
            <person name="Christiansen C."/>
            <person name="Contreras R."/>
            <person name="Crouzet M."/>
            <person name="Cziepluch C."/>
            <person name="Demolis N."/>
            <person name="Delaveau T."/>
            <person name="Doignon F."/>
            <person name="Domdey H."/>
            <person name="Duesterhus S."/>
            <person name="Dubois E."/>
            <person name="Dujon B."/>
            <person name="El Bakkoury M."/>
            <person name="Entian K.-D."/>
            <person name="Feuermann M."/>
            <person name="Fiers W."/>
            <person name="Fobo G.M."/>
            <person name="Fritz C."/>
            <person name="Gassenhuber J."/>
            <person name="Glansdorff N."/>
            <person name="Goffeau A."/>
            <person name="Grivell L.A."/>
            <person name="de Haan M."/>
            <person name="Hein C."/>
            <person name="Herbert C.J."/>
            <person name="Hollenberg C.P."/>
            <person name="Holmstroem K."/>
            <person name="Jacq C."/>
            <person name="Jacquet M."/>
            <person name="Jauniaux J.-C."/>
            <person name="Jonniaux J.-L."/>
            <person name="Kallesoee T."/>
            <person name="Kiesau P."/>
            <person name="Kirchrath L."/>
            <person name="Koetter P."/>
            <person name="Korol S."/>
            <person name="Liebl S."/>
            <person name="Logghe M."/>
            <person name="Lohan A.J.E."/>
            <person name="Louis E.J."/>
            <person name="Li Z.Y."/>
            <person name="Maat M.J."/>
            <person name="Mallet L."/>
            <person name="Mannhaupt G."/>
            <person name="Messenguy F."/>
            <person name="Miosga T."/>
            <person name="Molemans F."/>
            <person name="Mueller S."/>
            <person name="Nasr F."/>
            <person name="Obermaier B."/>
            <person name="Perea J."/>
            <person name="Pierard A."/>
            <person name="Piravandi E."/>
            <person name="Pohl F.M."/>
            <person name="Pohl T.M."/>
            <person name="Potier S."/>
            <person name="Proft M."/>
            <person name="Purnelle B."/>
            <person name="Ramezani Rad M."/>
            <person name="Rieger M."/>
            <person name="Rose M."/>
            <person name="Schaaff-Gerstenschlaeger I."/>
            <person name="Scherens B."/>
            <person name="Schwarzlose C."/>
            <person name="Skala J."/>
            <person name="Slonimski P.P."/>
            <person name="Smits P.H.M."/>
            <person name="Souciet J.-L."/>
            <person name="Steensma H.Y."/>
            <person name="Stucka R."/>
            <person name="Urrestarazu L.A."/>
            <person name="van der Aart Q.J.M."/>
            <person name="Van Dyck L."/>
            <person name="Vassarotti A."/>
            <person name="Vetter I."/>
            <person name="Vierendeels F."/>
            <person name="Vissers S."/>
            <person name="Wagner G."/>
            <person name="de Wergifosse P."/>
            <person name="Wolfe K.H."/>
            <person name="Zagulski M."/>
            <person name="Zimmermann F.K."/>
            <person name="Mewes H.-W."/>
            <person name="Kleine K."/>
        </authorList>
    </citation>
    <scope>NUCLEOTIDE SEQUENCE [LARGE SCALE GENOMIC DNA]</scope>
    <source>
        <strain>ATCC 204508 / S288c</strain>
    </source>
</reference>
<reference key="2">
    <citation type="journal article" date="2014" name="G3 (Bethesda)">
        <title>The reference genome sequence of Saccharomyces cerevisiae: Then and now.</title>
        <authorList>
            <person name="Engel S.R."/>
            <person name="Dietrich F.S."/>
            <person name="Fisk D.G."/>
            <person name="Binkley G."/>
            <person name="Balakrishnan R."/>
            <person name="Costanzo M.C."/>
            <person name="Dwight S.S."/>
            <person name="Hitz B.C."/>
            <person name="Karra K."/>
            <person name="Nash R.S."/>
            <person name="Weng S."/>
            <person name="Wong E.D."/>
            <person name="Lloyd P."/>
            <person name="Skrzypek M.S."/>
            <person name="Miyasato S.R."/>
            <person name="Simison M."/>
            <person name="Cherry J.M."/>
        </authorList>
    </citation>
    <scope>GENOME REANNOTATION</scope>
    <source>
        <strain>ATCC 204508 / S288c</strain>
    </source>
</reference>
<reference key="3">
    <citation type="journal article" date="2007" name="Genome Res.">
        <title>Approaching a complete repository of sequence-verified protein-encoding clones for Saccharomyces cerevisiae.</title>
        <authorList>
            <person name="Hu Y."/>
            <person name="Rolfs A."/>
            <person name="Bhullar B."/>
            <person name="Murthy T.V.S."/>
            <person name="Zhu C."/>
            <person name="Berger M.F."/>
            <person name="Camargo A.A."/>
            <person name="Kelley F."/>
            <person name="McCarron S."/>
            <person name="Jepson D."/>
            <person name="Richardson A."/>
            <person name="Raphael J."/>
            <person name="Moreira D."/>
            <person name="Taycher E."/>
            <person name="Zuo D."/>
            <person name="Mohr S."/>
            <person name="Kane M.F."/>
            <person name="Williamson J."/>
            <person name="Simpson A.J.G."/>
            <person name="Bulyk M.L."/>
            <person name="Harlow E."/>
            <person name="Marsischky G."/>
            <person name="Kolodner R.D."/>
            <person name="LaBaer J."/>
        </authorList>
    </citation>
    <scope>NUCLEOTIDE SEQUENCE [GENOMIC DNA]</scope>
    <source>
        <strain>ATCC 204508 / S288c</strain>
    </source>
</reference>
<reference key="4">
    <citation type="journal article" date="2002" name="J. Biol. Chem.">
        <title>A Saccharomyces cerevisiae gene required for heterologous fatty acid elongase activity encodes a microsomal beta-keto-reductase.</title>
        <authorList>
            <person name="Beaudoin F."/>
            <person name="Gable K."/>
            <person name="Sayanova O."/>
            <person name="Dunn T."/>
            <person name="Napier J.A."/>
        </authorList>
    </citation>
    <scope>FUNCTION</scope>
</reference>
<reference key="5">
    <citation type="journal article" date="2002" name="J. Biol. Chem.">
        <title>The Saccharomyces cerevisiae YBR159w gene encodes the 3-ketoreductase of the microsomal fatty acid elongase.</title>
        <authorList>
            <person name="Han G."/>
            <person name="Gable K."/>
            <person name="Kohlwein S.D."/>
            <person name="Beaudoin F."/>
            <person name="Napier J.A."/>
            <person name="Dunn T.M."/>
        </authorList>
    </citation>
    <scope>FUNCTION</scope>
    <scope>CATALYTIC ACTIVITY</scope>
    <scope>PATHWAY</scope>
    <scope>SUBCELLULAR LOCATION</scope>
    <scope>SUBUNIT</scope>
</reference>
<reference key="6">
    <citation type="journal article" date="2003" name="Mol. Genet. Genomics">
        <title>Functional differentiation and selective inactivation of multiple Saccharomyces cerevisiae genes involved in very-long-chain fatty acid synthesis.</title>
        <authorList>
            <person name="Roessler H."/>
            <person name="Rieck C."/>
            <person name="Delong T."/>
            <person name="Hoja U."/>
            <person name="Schweizer E."/>
        </authorList>
    </citation>
    <scope>FUNCTION</scope>
</reference>
<reference key="7">
    <citation type="journal article" date="2003" name="Nature">
        <title>Global analysis of protein localization in budding yeast.</title>
        <authorList>
            <person name="Huh W.-K."/>
            <person name="Falvo J.V."/>
            <person name="Gerke L.C."/>
            <person name="Carroll A.S."/>
            <person name="Howson R.W."/>
            <person name="Weissman J.S."/>
            <person name="O'Shea E.K."/>
        </authorList>
    </citation>
    <scope>SUBCELLULAR LOCATION [LARGE SCALE ANALYSIS]</scope>
</reference>
<reference key="8">
    <citation type="journal article" date="2003" name="Nature">
        <title>Global analysis of protein expression in yeast.</title>
        <authorList>
            <person name="Ghaemmaghami S."/>
            <person name="Huh W.-K."/>
            <person name="Bower K."/>
            <person name="Howson R.W."/>
            <person name="Belle A."/>
            <person name="Dephoure N."/>
            <person name="O'Shea E.K."/>
            <person name="Weissman J.S."/>
        </authorList>
    </citation>
    <scope>LEVEL OF PROTEIN EXPRESSION [LARGE SCALE ANALYSIS]</scope>
</reference>
<reference key="9">
    <citation type="journal article" date="2007" name="Cell">
        <title>A molecular caliper mechanism for determining very long-chain fatty acid length.</title>
        <authorList>
            <person name="Denic V."/>
            <person name="Weissman J.S."/>
        </authorList>
    </citation>
    <scope>FUNCTION</scope>
    <scope>CATALYTIC ACTIVITY</scope>
</reference>
<reference key="10">
    <citation type="journal article" date="2012" name="Proc. Natl. Acad. Sci. U.S.A.">
        <title>N-terminal acetylome analyses and functional insights of the N-terminal acetyltransferase NatB.</title>
        <authorList>
            <person name="Van Damme P."/>
            <person name="Lasa M."/>
            <person name="Polevoda B."/>
            <person name="Gazquez C."/>
            <person name="Elosegui-Artola A."/>
            <person name="Kim D.S."/>
            <person name="De Juan-Pardo E."/>
            <person name="Demeyer K."/>
            <person name="Hole K."/>
            <person name="Larrea E."/>
            <person name="Timmerman E."/>
            <person name="Prieto J."/>
            <person name="Arnesen T."/>
            <person name="Sherman F."/>
            <person name="Gevaert K."/>
            <person name="Aldabe R."/>
        </authorList>
    </citation>
    <scope>IDENTIFICATION BY MASS SPECTROMETRY [LARGE SCALE ANALYSIS]</scope>
</reference>
<reference key="11">
    <citation type="journal article" date="2013" name="Mol. Cell. Biol.">
        <title>The yeast eukaryotic translation initiation factor 2B translation initiation complex interacts with the fatty acid synthesis enzyme YBR159W and endoplasmic reticulum membranes.</title>
        <authorList>
            <person name="Browne C.M."/>
            <person name="Samir P."/>
            <person name="Fites J.S."/>
            <person name="Villarreal S.A."/>
            <person name="Link A.J."/>
        </authorList>
    </citation>
    <scope>SUBCELLULAR LOCATION</scope>
</reference>
<reference key="12">
    <citation type="journal article" date="2014" name="PLoS ONE">
        <title>Two modes of regulation of the fatty acid elongase ELOVL6 by the 3-ketoacyl-CoA reductase KAR in the fatty acid elongation cycle.</title>
        <authorList>
            <person name="Naganuma T."/>
            <person name="Kihara A."/>
        </authorList>
    </citation>
    <scope>CATALYTIC ACTIVITY</scope>
</reference>
<organism>
    <name type="scientific">Saccharomyces cerevisiae (strain ATCC 204508 / S288c)</name>
    <name type="common">Baker's yeast</name>
    <dbReference type="NCBI Taxonomy" id="559292"/>
    <lineage>
        <taxon>Eukaryota</taxon>
        <taxon>Fungi</taxon>
        <taxon>Dikarya</taxon>
        <taxon>Ascomycota</taxon>
        <taxon>Saccharomycotina</taxon>
        <taxon>Saccharomycetes</taxon>
        <taxon>Saccharomycetales</taxon>
        <taxon>Saccharomycetaceae</taxon>
        <taxon>Saccharomyces</taxon>
    </lineage>
</organism>
<dbReference type="EC" id="1.1.1.330" evidence="3"/>
<dbReference type="EMBL" id="Z36028">
    <property type="protein sequence ID" value="CAA85118.1"/>
    <property type="molecule type" value="Genomic_DNA"/>
</dbReference>
<dbReference type="EMBL" id="AY557868">
    <property type="protein sequence ID" value="AAS56194.1"/>
    <property type="molecule type" value="Genomic_DNA"/>
</dbReference>
<dbReference type="EMBL" id="BK006936">
    <property type="protein sequence ID" value="DAA07274.1"/>
    <property type="molecule type" value="Genomic_DNA"/>
</dbReference>
<dbReference type="PIR" id="S46030">
    <property type="entry name" value="S46030"/>
</dbReference>
<dbReference type="RefSeq" id="NP_009717.1">
    <property type="nucleotide sequence ID" value="NM_001178507.1"/>
</dbReference>
<dbReference type="SMR" id="P38286"/>
<dbReference type="BioGRID" id="32858">
    <property type="interactions" value="178"/>
</dbReference>
<dbReference type="DIP" id="DIP-8128N"/>
<dbReference type="FunCoup" id="P38286">
    <property type="interactions" value="876"/>
</dbReference>
<dbReference type="IntAct" id="P38286">
    <property type="interactions" value="78"/>
</dbReference>
<dbReference type="MINT" id="P38286"/>
<dbReference type="STRING" id="4932.YBR159W"/>
<dbReference type="SwissLipids" id="SLP:000000502"/>
<dbReference type="iPTMnet" id="P38286"/>
<dbReference type="PaxDb" id="4932-YBR159W"/>
<dbReference type="PeptideAtlas" id="P38286"/>
<dbReference type="EnsemblFungi" id="YBR159W_mRNA">
    <property type="protein sequence ID" value="YBR159W"/>
    <property type="gene ID" value="YBR159W"/>
</dbReference>
<dbReference type="GeneID" id="852456"/>
<dbReference type="KEGG" id="sce:YBR159W"/>
<dbReference type="AGR" id="SGD:S000000363"/>
<dbReference type="SGD" id="S000000363">
    <property type="gene designation" value="IFA38"/>
</dbReference>
<dbReference type="VEuPathDB" id="FungiDB:YBR159W"/>
<dbReference type="eggNOG" id="KOG1014">
    <property type="taxonomic scope" value="Eukaryota"/>
</dbReference>
<dbReference type="HOGENOM" id="CLU_010194_38_0_1"/>
<dbReference type="InParanoid" id="P38286"/>
<dbReference type="OMA" id="LVAPGMM"/>
<dbReference type="OrthoDB" id="5545019at2759"/>
<dbReference type="BioCyc" id="MetaCyc:MONOMER3O-79"/>
<dbReference type="BioCyc" id="YEAST:MONOMER3O-79"/>
<dbReference type="BRENDA" id="1.1.1.330">
    <property type="organism ID" value="984"/>
</dbReference>
<dbReference type="UniPathway" id="UPA00094"/>
<dbReference type="BioGRID-ORCS" id="852456">
    <property type="hits" value="1 hit in 10 CRISPR screens"/>
</dbReference>
<dbReference type="PRO" id="PR:P38286"/>
<dbReference type="Proteomes" id="UP000002311">
    <property type="component" value="Chromosome II"/>
</dbReference>
<dbReference type="RNAct" id="P38286">
    <property type="molecule type" value="protein"/>
</dbReference>
<dbReference type="GO" id="GO:0005783">
    <property type="term" value="C:endoplasmic reticulum"/>
    <property type="evidence" value="ECO:0000314"/>
    <property type="project" value="SGD"/>
</dbReference>
<dbReference type="GO" id="GO:0005789">
    <property type="term" value="C:endoplasmic reticulum membrane"/>
    <property type="evidence" value="ECO:0000314"/>
    <property type="project" value="SGD"/>
</dbReference>
<dbReference type="GO" id="GO:0045703">
    <property type="term" value="F:ketoreductase activity"/>
    <property type="evidence" value="ECO:0000315"/>
    <property type="project" value="SGD"/>
</dbReference>
<dbReference type="GO" id="GO:0141040">
    <property type="term" value="F:very-long-chain 3-oxoacyl-CoA reductase activity"/>
    <property type="evidence" value="ECO:0007669"/>
    <property type="project" value="UniProtKB-EC"/>
</dbReference>
<dbReference type="GO" id="GO:0030497">
    <property type="term" value="P:fatty acid elongation"/>
    <property type="evidence" value="ECO:0000315"/>
    <property type="project" value="SGD"/>
</dbReference>
<dbReference type="GO" id="GO:0030148">
    <property type="term" value="P:sphingolipid biosynthetic process"/>
    <property type="evidence" value="ECO:0000315"/>
    <property type="project" value="SGD"/>
</dbReference>
<dbReference type="GO" id="GO:0042761">
    <property type="term" value="P:very long-chain fatty acid biosynthetic process"/>
    <property type="evidence" value="ECO:0000315"/>
    <property type="project" value="SGD"/>
</dbReference>
<dbReference type="CDD" id="cd05356">
    <property type="entry name" value="17beta-HSD1_like_SDR_c"/>
    <property type="match status" value="1"/>
</dbReference>
<dbReference type="FunFam" id="3.40.50.720:FF:000317">
    <property type="entry name" value="Very-long-chain 3-oxoacyl-CoA reductase"/>
    <property type="match status" value="1"/>
</dbReference>
<dbReference type="Gene3D" id="3.40.50.720">
    <property type="entry name" value="NAD(P)-binding Rossmann-like Domain"/>
    <property type="match status" value="1"/>
</dbReference>
<dbReference type="HAMAP" id="MF_03107">
    <property type="entry name" value="3_ketoreductase"/>
    <property type="match status" value="1"/>
</dbReference>
<dbReference type="InterPro" id="IPR027533">
    <property type="entry name" value="3_ketoreductase_fungal"/>
</dbReference>
<dbReference type="InterPro" id="IPR036291">
    <property type="entry name" value="NAD(P)-bd_dom_sf"/>
</dbReference>
<dbReference type="InterPro" id="IPR020904">
    <property type="entry name" value="Sc_DH/Rdtase_CS"/>
</dbReference>
<dbReference type="InterPro" id="IPR002347">
    <property type="entry name" value="SDR_fam"/>
</dbReference>
<dbReference type="PANTHER" id="PTHR43086:SF2">
    <property type="entry name" value="HYDROXYSTEROID DEHYDROGENASE-LIKE PROTEIN 1"/>
    <property type="match status" value="1"/>
</dbReference>
<dbReference type="PANTHER" id="PTHR43086">
    <property type="entry name" value="VERY-LONG-CHAIN 3-OXOOACYL-COA REDUCTASE"/>
    <property type="match status" value="1"/>
</dbReference>
<dbReference type="Pfam" id="PF00106">
    <property type="entry name" value="adh_short"/>
    <property type="match status" value="1"/>
</dbReference>
<dbReference type="PIRSF" id="PIRSF000126">
    <property type="entry name" value="11-beta-HSD1"/>
    <property type="match status" value="1"/>
</dbReference>
<dbReference type="PRINTS" id="PR00081">
    <property type="entry name" value="GDHRDH"/>
</dbReference>
<dbReference type="SUPFAM" id="SSF51735">
    <property type="entry name" value="NAD(P)-binding Rossmann-fold domains"/>
    <property type="match status" value="1"/>
</dbReference>
<dbReference type="PROSITE" id="PS00061">
    <property type="entry name" value="ADH_SHORT"/>
    <property type="match status" value="1"/>
</dbReference>